<protein>
    <recommendedName>
        <fullName>Exonuclease 1</fullName>
        <ecNumber>3.1.-.-</ecNumber>
    </recommendedName>
    <alternativeName>
        <fullName>Exonuclease I</fullName>
    </alternativeName>
</protein>
<sequence>MGIQGLLQFIKDASEPMHVKKYRGQTVAVDTYCWLHKGAFSCAEKLAKGEPTDQYVSYCMKFVDMLLSFGVKPILVFDGRNLPSKQEVEKSRRERRQANLQKGKQLLREGKITEARECFTRSVNITPSMAHDVIRAARTRGVDCVVAPYEADAQLAFLNKSDIAQAVITEDSDLLAFGCKKVILKMDKQGNGLEIEQCHLGRCKSLGNIFTEEKFRYMCILSGCDYLQSLYGIGLGKACKLLRMANNPDILKVIKKMGQYLKMDISVPEEYIEGFTKANNTFLYQLVFDPLRRKVVPLNPYPDHINPAALSYAGTNVGDEKGLQMALGNLDINTMQRIDDFNPDAPQTQPPKAPRSSSWNDRCDKTATTQASIWSQNYEPGCTKSQSPTSPKRPPPTRGKERIVSVQSLKLPQRESQVKRPREDTSLSVDDLLEQYTAGVKRHCPETQPTTKPLTNDNKVSKENHCGSTSGPFRPRNRFATLLQWRNRSEEGTEEQGTCSRFFCHDESNIAETQEDSKQDSSQSVESQEKHVSQSGGDTSSLCEEPEREQDKDEPSSPPASPSCSSRPASVGLGVFSWSGTTKELNKSVSHPARDSTERQRSSSTPSGLSTLQQFHRNKARISWAGPGLSLSSSPVEGSEDAGNSPGSPPSQDSAYFSQSSSISASVENSLVTEDNSDKEKERDSVVSNSPSSSPLDRLKPAVNRTKVSGLSRKGACGQGKGGKIETSAPARASGLRRKPSGKKNVNNENSPGLQATISGLWGAFSFKKDSPKLSATKKGEPMSPVGENVVMETTQADKEIFIIAE</sequence>
<keyword id="KW-0227">DNA damage</keyword>
<keyword id="KW-0228">DNA excision</keyword>
<keyword id="KW-0234">DNA repair</keyword>
<keyword id="KW-0238">DNA-binding</keyword>
<keyword id="KW-0255">Endonuclease</keyword>
<keyword id="KW-0267">Excision nuclease</keyword>
<keyword id="KW-0269">Exonuclease</keyword>
<keyword id="KW-0378">Hydrolase</keyword>
<keyword id="KW-0460">Magnesium</keyword>
<keyword id="KW-0479">Metal-binding</keyword>
<keyword id="KW-0540">Nuclease</keyword>
<keyword id="KW-0539">Nucleus</keyword>
<keyword id="KW-1185">Reference proteome</keyword>
<accession>Q803U7</accession>
<name>EXO1_DANRE</name>
<evidence type="ECO:0000250" key="1"/>
<evidence type="ECO:0000256" key="2">
    <source>
        <dbReference type="SAM" id="MobiDB-lite"/>
    </source>
</evidence>
<evidence type="ECO:0000305" key="3"/>
<feature type="chain" id="PRO_0000154041" description="Exonuclease 1">
    <location>
        <begin position="1"/>
        <end position="806"/>
    </location>
</feature>
<feature type="region of interest" description="N-domain">
    <location>
        <begin position="1"/>
        <end position="99"/>
    </location>
</feature>
<feature type="region of interest" description="I-domain">
    <location>
        <begin position="138"/>
        <end position="229"/>
    </location>
</feature>
<feature type="region of interest" description="Disordered" evidence="2">
    <location>
        <begin position="337"/>
        <end position="426"/>
    </location>
</feature>
<feature type="region of interest" description="Disordered" evidence="2">
    <location>
        <begin position="443"/>
        <end position="475"/>
    </location>
</feature>
<feature type="region of interest" description="Disordered" evidence="2">
    <location>
        <begin position="512"/>
        <end position="754"/>
    </location>
</feature>
<feature type="compositionally biased region" description="Polar residues" evidence="2">
    <location>
        <begin position="355"/>
        <end position="378"/>
    </location>
</feature>
<feature type="compositionally biased region" description="Basic and acidic residues" evidence="2">
    <location>
        <begin position="412"/>
        <end position="425"/>
    </location>
</feature>
<feature type="compositionally biased region" description="Polar residues" evidence="2">
    <location>
        <begin position="447"/>
        <end position="458"/>
    </location>
</feature>
<feature type="compositionally biased region" description="Polar residues" evidence="2">
    <location>
        <begin position="533"/>
        <end position="542"/>
    </location>
</feature>
<feature type="compositionally biased region" description="Polar residues" evidence="2">
    <location>
        <begin position="578"/>
        <end position="589"/>
    </location>
</feature>
<feature type="compositionally biased region" description="Basic and acidic residues" evidence="2">
    <location>
        <begin position="592"/>
        <end position="601"/>
    </location>
</feature>
<feature type="compositionally biased region" description="Polar residues" evidence="2">
    <location>
        <begin position="602"/>
        <end position="615"/>
    </location>
</feature>
<feature type="compositionally biased region" description="Low complexity" evidence="2">
    <location>
        <begin position="651"/>
        <end position="670"/>
    </location>
</feature>
<feature type="compositionally biased region" description="Basic and acidic residues" evidence="2">
    <location>
        <begin position="676"/>
        <end position="685"/>
    </location>
</feature>
<feature type="compositionally biased region" description="Low complexity" evidence="2">
    <location>
        <begin position="686"/>
        <end position="696"/>
    </location>
</feature>
<feature type="compositionally biased region" description="Polar residues" evidence="2">
    <location>
        <begin position="744"/>
        <end position="754"/>
    </location>
</feature>
<feature type="binding site" evidence="1">
    <location>
        <position position="30"/>
    </location>
    <ligand>
        <name>Mg(2+)</name>
        <dbReference type="ChEBI" id="CHEBI:18420"/>
        <label>1</label>
    </ligand>
</feature>
<feature type="binding site" evidence="1">
    <location>
        <position position="78"/>
    </location>
    <ligand>
        <name>Mg(2+)</name>
        <dbReference type="ChEBI" id="CHEBI:18420"/>
        <label>1</label>
    </ligand>
</feature>
<feature type="binding site" evidence="1">
    <location>
        <position position="150"/>
    </location>
    <ligand>
        <name>Mg(2+)</name>
        <dbReference type="ChEBI" id="CHEBI:18420"/>
        <label>1</label>
    </ligand>
</feature>
<feature type="binding site" evidence="1">
    <location>
        <position position="152"/>
    </location>
    <ligand>
        <name>Mg(2+)</name>
        <dbReference type="ChEBI" id="CHEBI:18420"/>
        <label>1</label>
    </ligand>
</feature>
<feature type="binding site" evidence="1">
    <location>
        <position position="171"/>
    </location>
    <ligand>
        <name>Mg(2+)</name>
        <dbReference type="ChEBI" id="CHEBI:18420"/>
        <label>2</label>
    </ligand>
</feature>
<feature type="binding site" evidence="1">
    <location>
        <position position="173"/>
    </location>
    <ligand>
        <name>Mg(2+)</name>
        <dbReference type="ChEBI" id="CHEBI:18420"/>
        <label>2</label>
    </ligand>
</feature>
<feature type="binding site" evidence="1">
    <location>
        <position position="225"/>
    </location>
    <ligand>
        <name>Mg(2+)</name>
        <dbReference type="ChEBI" id="CHEBI:18420"/>
        <label>2</label>
    </ligand>
</feature>
<dbReference type="EC" id="3.1.-.-"/>
<dbReference type="EMBL" id="BC044187">
    <property type="protein sequence ID" value="AAH44187.1"/>
    <property type="molecule type" value="mRNA"/>
</dbReference>
<dbReference type="RefSeq" id="NP_998634.1">
    <property type="nucleotide sequence ID" value="NM_213469.1"/>
</dbReference>
<dbReference type="SMR" id="Q803U7"/>
<dbReference type="FunCoup" id="Q803U7">
    <property type="interactions" value="973"/>
</dbReference>
<dbReference type="STRING" id="7955.ENSDARP00000073846"/>
<dbReference type="PaxDb" id="7955-ENSDARP00000073846"/>
<dbReference type="GeneID" id="406778"/>
<dbReference type="KEGG" id="dre:406778"/>
<dbReference type="AGR" id="ZFIN:ZDB-GENE-040426-2828"/>
<dbReference type="CTD" id="9156"/>
<dbReference type="ZFIN" id="ZDB-GENE-040426-2828">
    <property type="gene designation" value="exo1"/>
</dbReference>
<dbReference type="eggNOG" id="KOG2518">
    <property type="taxonomic scope" value="Eukaryota"/>
</dbReference>
<dbReference type="InParanoid" id="Q803U7"/>
<dbReference type="OrthoDB" id="26491at2759"/>
<dbReference type="PhylomeDB" id="Q803U7"/>
<dbReference type="Reactome" id="R-DRE-5358565">
    <property type="pathway name" value="Mismatch repair (MMR) directed by MSH2:MSH6 (MutSalpha)"/>
</dbReference>
<dbReference type="PRO" id="PR:Q803U7"/>
<dbReference type="Proteomes" id="UP000000437">
    <property type="component" value="Alternate scaffold 17"/>
</dbReference>
<dbReference type="Proteomes" id="UP000000437">
    <property type="component" value="Chromosome 17"/>
</dbReference>
<dbReference type="GO" id="GO:0005634">
    <property type="term" value="C:nucleus"/>
    <property type="evidence" value="ECO:0000250"/>
    <property type="project" value="UniProtKB"/>
</dbReference>
<dbReference type="GO" id="GO:0035312">
    <property type="term" value="F:5'-3' DNA exonuclease activity"/>
    <property type="evidence" value="ECO:0000318"/>
    <property type="project" value="GO_Central"/>
</dbReference>
<dbReference type="GO" id="GO:0017108">
    <property type="term" value="F:5'-flap endonuclease activity"/>
    <property type="evidence" value="ECO:0000318"/>
    <property type="project" value="GO_Central"/>
</dbReference>
<dbReference type="GO" id="GO:0003677">
    <property type="term" value="F:DNA binding"/>
    <property type="evidence" value="ECO:0007669"/>
    <property type="project" value="UniProtKB-KW"/>
</dbReference>
<dbReference type="GO" id="GO:0048256">
    <property type="term" value="F:flap endonuclease activity"/>
    <property type="evidence" value="ECO:0000250"/>
    <property type="project" value="UniProtKB"/>
</dbReference>
<dbReference type="GO" id="GO:0046872">
    <property type="term" value="F:metal ion binding"/>
    <property type="evidence" value="ECO:0007669"/>
    <property type="project" value="UniProtKB-KW"/>
</dbReference>
<dbReference type="GO" id="GO:0045145">
    <property type="term" value="F:single-stranded DNA 5'-3' DNA exonuclease activity"/>
    <property type="evidence" value="ECO:0000250"/>
    <property type="project" value="UniProtKB"/>
</dbReference>
<dbReference type="GO" id="GO:0006310">
    <property type="term" value="P:DNA recombination"/>
    <property type="evidence" value="ECO:0000250"/>
    <property type="project" value="UniProtKB"/>
</dbReference>
<dbReference type="GO" id="GO:0006298">
    <property type="term" value="P:mismatch repair"/>
    <property type="evidence" value="ECO:0000250"/>
    <property type="project" value="UniProtKB"/>
</dbReference>
<dbReference type="CDD" id="cd09908">
    <property type="entry name" value="H3TH_EXO1"/>
    <property type="match status" value="1"/>
</dbReference>
<dbReference type="CDD" id="cd09857">
    <property type="entry name" value="PIN_EXO1"/>
    <property type="match status" value="1"/>
</dbReference>
<dbReference type="FunFam" id="3.40.50.1010:FF:000096">
    <property type="entry name" value="Exonuclease 1"/>
    <property type="match status" value="1"/>
</dbReference>
<dbReference type="FunFam" id="1.10.150.20:FF:000011">
    <property type="entry name" value="exonuclease 1"/>
    <property type="match status" value="1"/>
</dbReference>
<dbReference type="Gene3D" id="1.10.150.20">
    <property type="entry name" value="5' to 3' exonuclease, C-terminal subdomain"/>
    <property type="match status" value="1"/>
</dbReference>
<dbReference type="Gene3D" id="3.40.50.1010">
    <property type="entry name" value="5'-nuclease"/>
    <property type="match status" value="1"/>
</dbReference>
<dbReference type="InterPro" id="IPR036279">
    <property type="entry name" value="5-3_exonuclease_C_sf"/>
</dbReference>
<dbReference type="InterPro" id="IPR037315">
    <property type="entry name" value="EXO1_H3TH"/>
</dbReference>
<dbReference type="InterPro" id="IPR008918">
    <property type="entry name" value="HhH2"/>
</dbReference>
<dbReference type="InterPro" id="IPR029060">
    <property type="entry name" value="PIN-like_dom_sf"/>
</dbReference>
<dbReference type="InterPro" id="IPR044752">
    <property type="entry name" value="PIN-like_EXO1"/>
</dbReference>
<dbReference type="InterPro" id="IPR019734">
    <property type="entry name" value="TPR_rpt"/>
</dbReference>
<dbReference type="InterPro" id="IPR006086">
    <property type="entry name" value="XPG-I_dom"/>
</dbReference>
<dbReference type="InterPro" id="IPR006084">
    <property type="entry name" value="XPG/Rad2"/>
</dbReference>
<dbReference type="InterPro" id="IPR019974">
    <property type="entry name" value="XPG_CS"/>
</dbReference>
<dbReference type="InterPro" id="IPR006085">
    <property type="entry name" value="XPG_DNA_repair_N"/>
</dbReference>
<dbReference type="PANTHER" id="PTHR11081:SF8">
    <property type="entry name" value="EXONUCLEASE 1"/>
    <property type="match status" value="1"/>
</dbReference>
<dbReference type="PANTHER" id="PTHR11081">
    <property type="entry name" value="FLAP ENDONUCLEASE FAMILY MEMBER"/>
    <property type="match status" value="1"/>
</dbReference>
<dbReference type="Pfam" id="PF00867">
    <property type="entry name" value="XPG_I"/>
    <property type="match status" value="1"/>
</dbReference>
<dbReference type="Pfam" id="PF00752">
    <property type="entry name" value="XPG_N"/>
    <property type="match status" value="1"/>
</dbReference>
<dbReference type="PRINTS" id="PR00853">
    <property type="entry name" value="XPGRADSUPER"/>
</dbReference>
<dbReference type="SMART" id="SM00279">
    <property type="entry name" value="HhH2"/>
    <property type="match status" value="1"/>
</dbReference>
<dbReference type="SMART" id="SM00484">
    <property type="entry name" value="XPGI"/>
    <property type="match status" value="1"/>
</dbReference>
<dbReference type="SMART" id="SM00485">
    <property type="entry name" value="XPGN"/>
    <property type="match status" value="1"/>
</dbReference>
<dbReference type="SUPFAM" id="SSF47807">
    <property type="entry name" value="5' to 3' exonuclease, C-terminal subdomain"/>
    <property type="match status" value="1"/>
</dbReference>
<dbReference type="SUPFAM" id="SSF88723">
    <property type="entry name" value="PIN domain-like"/>
    <property type="match status" value="1"/>
</dbReference>
<dbReference type="PROSITE" id="PS00841">
    <property type="entry name" value="XPG_1"/>
    <property type="match status" value="1"/>
</dbReference>
<dbReference type="PROSITE" id="PS00842">
    <property type="entry name" value="XPG_2"/>
    <property type="match status" value="1"/>
</dbReference>
<comment type="function">
    <text evidence="1">5'-&gt;3' double-stranded DNA exonuclease which may also contain a cryptic 3'-&gt;5' double-stranded DNA exonuclease activity. Also exhibits endonuclease activity against 5'-overhanging flap structures similar to those generated by displacement synthesis when DNA polymerase encounters the 5'-end of a downstream Okazaki fragment. Required for DNA mismatch repair (MMR) (By similarity).</text>
</comment>
<comment type="cofactor">
    <cofactor evidence="1">
        <name>Mg(2+)</name>
        <dbReference type="ChEBI" id="CHEBI:18420"/>
    </cofactor>
    <text evidence="1">Binds 2 magnesium ions per subunit. They probably participate in the reaction catalyzed by the enzyme. May bind an additional third magnesium ion after substrate binding.</text>
</comment>
<comment type="subcellular location">
    <subcellularLocation>
        <location evidence="1">Nucleus</location>
    </subcellularLocation>
</comment>
<comment type="similarity">
    <text evidence="3">Belongs to the XPG/RAD2 endonuclease family. EXO1 subfamily.</text>
</comment>
<reference key="1">
    <citation type="submission" date="2003-01" db="EMBL/GenBank/DDBJ databases">
        <authorList>
            <consortium name="NIH - Zebrafish Gene Collection (ZGC) project"/>
        </authorList>
    </citation>
    <scope>NUCLEOTIDE SEQUENCE [LARGE SCALE MRNA]</scope>
    <source>
        <strain>AB</strain>
    </source>
</reference>
<gene>
    <name type="primary">exo1</name>
    <name type="ORF">zgc:55521</name>
</gene>
<organism>
    <name type="scientific">Danio rerio</name>
    <name type="common">Zebrafish</name>
    <name type="synonym">Brachydanio rerio</name>
    <dbReference type="NCBI Taxonomy" id="7955"/>
    <lineage>
        <taxon>Eukaryota</taxon>
        <taxon>Metazoa</taxon>
        <taxon>Chordata</taxon>
        <taxon>Craniata</taxon>
        <taxon>Vertebrata</taxon>
        <taxon>Euteleostomi</taxon>
        <taxon>Actinopterygii</taxon>
        <taxon>Neopterygii</taxon>
        <taxon>Teleostei</taxon>
        <taxon>Ostariophysi</taxon>
        <taxon>Cypriniformes</taxon>
        <taxon>Danionidae</taxon>
        <taxon>Danioninae</taxon>
        <taxon>Danio</taxon>
    </lineage>
</organism>
<proteinExistence type="evidence at transcript level"/>